<sequence>MPSSWGKIFKVSTFGESHGTSVGVVVEGVPAGIPIRLEEIQKDLNRRRPGQSNLTTPRDETDTVRVVSGVFEGKTIGSPIALIVDNQNTISKDYENLRTTFRPSHADYTYQMKYGFRAHVGGGRSSVRETIGRVAAAAIARMILKDDLGIETIAWVDSIGTVQSNIGDKYPKSREEVDQNEVRCPDVGSADQMRSLILKMKEAGDSVGGTIQCVSYNLPPGLGDPVYDKLDGDLAKAILSIPACKGFEVGSGFSGTLLTGSSHNDEFYVEEGTGRVRTRTNHSGGLQGGISNGEELVIRAAFKPTSTIFKKQNTINLKGEETILEAKGRHDPCVLPRAVPIIEAVVNLVLIDAYLYQRAINPQWFQKWARIPDYYKDLEL</sequence>
<protein>
    <recommendedName>
        <fullName evidence="1">Chorismate synthase</fullName>
        <shortName evidence="1">CS</shortName>
        <ecNumber evidence="1">4.2.3.5</ecNumber>
    </recommendedName>
    <alternativeName>
        <fullName evidence="1">5-enolpyruvylshikimate-3-phosphate phospholyase</fullName>
    </alternativeName>
</protein>
<name>AROC_LEPIC</name>
<feature type="chain" id="PRO_0000140604" description="Chorismate synthase">
    <location>
        <begin position="1"/>
        <end position="380"/>
    </location>
</feature>
<feature type="binding site" evidence="1">
    <location>
        <position position="47"/>
    </location>
    <ligand>
        <name>NADP(+)</name>
        <dbReference type="ChEBI" id="CHEBI:58349"/>
    </ligand>
</feature>
<feature type="binding site" evidence="1">
    <location>
        <begin position="124"/>
        <end position="126"/>
    </location>
    <ligand>
        <name>FMN</name>
        <dbReference type="ChEBI" id="CHEBI:58210"/>
    </ligand>
</feature>
<feature type="binding site" evidence="1">
    <location>
        <position position="288"/>
    </location>
    <ligand>
        <name>FMN</name>
        <dbReference type="ChEBI" id="CHEBI:58210"/>
    </ligand>
</feature>
<feature type="binding site" evidence="1">
    <location>
        <begin position="303"/>
        <end position="307"/>
    </location>
    <ligand>
        <name>FMN</name>
        <dbReference type="ChEBI" id="CHEBI:58210"/>
    </ligand>
</feature>
<feature type="binding site" evidence="1">
    <location>
        <position position="329"/>
    </location>
    <ligand>
        <name>FMN</name>
        <dbReference type="ChEBI" id="CHEBI:58210"/>
    </ligand>
</feature>
<accession>Q72W01</accession>
<organism>
    <name type="scientific">Leptospira interrogans serogroup Icterohaemorrhagiae serovar copenhageni (strain Fiocruz L1-130)</name>
    <dbReference type="NCBI Taxonomy" id="267671"/>
    <lineage>
        <taxon>Bacteria</taxon>
        <taxon>Pseudomonadati</taxon>
        <taxon>Spirochaetota</taxon>
        <taxon>Spirochaetia</taxon>
        <taxon>Leptospirales</taxon>
        <taxon>Leptospiraceae</taxon>
        <taxon>Leptospira</taxon>
    </lineage>
</organism>
<proteinExistence type="inferred from homology"/>
<gene>
    <name evidence="1" type="primary">aroC</name>
    <name type="ordered locus">LIC_10140</name>
</gene>
<keyword id="KW-0028">Amino-acid biosynthesis</keyword>
<keyword id="KW-0057">Aromatic amino acid biosynthesis</keyword>
<keyword id="KW-0274">FAD</keyword>
<keyword id="KW-0285">Flavoprotein</keyword>
<keyword id="KW-0288">FMN</keyword>
<keyword id="KW-0456">Lyase</keyword>
<keyword id="KW-0521">NADP</keyword>
<evidence type="ECO:0000255" key="1">
    <source>
        <dbReference type="HAMAP-Rule" id="MF_00300"/>
    </source>
</evidence>
<reference key="1">
    <citation type="journal article" date="2004" name="J. Bacteriol.">
        <title>Comparative genomics of two Leptospira interrogans serovars reveals novel insights into physiology and pathogenesis.</title>
        <authorList>
            <person name="Nascimento A.L.T.O."/>
            <person name="Ko A.I."/>
            <person name="Martins E.A.L."/>
            <person name="Monteiro-Vitorello C.B."/>
            <person name="Ho P.L."/>
            <person name="Haake D.A."/>
            <person name="Verjovski-Almeida S."/>
            <person name="Hartskeerl R.A."/>
            <person name="Marques M.V."/>
            <person name="Oliveira M.C."/>
            <person name="Menck C.F.M."/>
            <person name="Leite L.C.C."/>
            <person name="Carrer H."/>
            <person name="Coutinho L.L."/>
            <person name="Degrave W.M."/>
            <person name="Dellagostin O.A."/>
            <person name="El-Dorry H."/>
            <person name="Ferro E.S."/>
            <person name="Ferro M.I.T."/>
            <person name="Furlan L.R."/>
            <person name="Gamberini M."/>
            <person name="Giglioti E.A."/>
            <person name="Goes-Neto A."/>
            <person name="Goldman G.H."/>
            <person name="Goldman M.H.S."/>
            <person name="Harakava R."/>
            <person name="Jeronimo S.M.B."/>
            <person name="Junqueira-de-Azevedo I.L.M."/>
            <person name="Kimura E.T."/>
            <person name="Kuramae E.E."/>
            <person name="Lemos E.G.M."/>
            <person name="Lemos M.V.F."/>
            <person name="Marino C.L."/>
            <person name="Nunes L.R."/>
            <person name="de Oliveira R.C."/>
            <person name="Pereira G.G."/>
            <person name="Reis M.S."/>
            <person name="Schriefer A."/>
            <person name="Siqueira W.J."/>
            <person name="Sommer P."/>
            <person name="Tsai S.M."/>
            <person name="Simpson A.J.G."/>
            <person name="Ferro J.A."/>
            <person name="Camargo L.E.A."/>
            <person name="Kitajima J.P."/>
            <person name="Setubal J.C."/>
            <person name="Van Sluys M.A."/>
        </authorList>
    </citation>
    <scope>NUCLEOTIDE SEQUENCE [LARGE SCALE GENOMIC DNA]</scope>
    <source>
        <strain>Fiocruz L1-130</strain>
    </source>
</reference>
<comment type="function">
    <text evidence="1">Catalyzes the anti-1,4-elimination of the C-3 phosphate and the C-6 proR hydrogen from 5-enolpyruvylshikimate-3-phosphate (EPSP) to yield chorismate, which is the branch point compound that serves as the starting substrate for the three terminal pathways of aromatic amino acid biosynthesis. This reaction introduces a second double bond into the aromatic ring system.</text>
</comment>
<comment type="catalytic activity">
    <reaction evidence="1">
        <text>5-O-(1-carboxyvinyl)-3-phosphoshikimate = chorismate + phosphate</text>
        <dbReference type="Rhea" id="RHEA:21020"/>
        <dbReference type="ChEBI" id="CHEBI:29748"/>
        <dbReference type="ChEBI" id="CHEBI:43474"/>
        <dbReference type="ChEBI" id="CHEBI:57701"/>
        <dbReference type="EC" id="4.2.3.5"/>
    </reaction>
</comment>
<comment type="cofactor">
    <cofactor evidence="1">
        <name>FMNH2</name>
        <dbReference type="ChEBI" id="CHEBI:57618"/>
    </cofactor>
    <text evidence="1">Reduced FMN (FMNH(2)).</text>
</comment>
<comment type="pathway">
    <text evidence="1">Metabolic intermediate biosynthesis; chorismate biosynthesis; chorismate from D-erythrose 4-phosphate and phosphoenolpyruvate: step 7/7.</text>
</comment>
<comment type="subunit">
    <text evidence="1">Homotetramer.</text>
</comment>
<comment type="similarity">
    <text evidence="1">Belongs to the chorismate synthase family.</text>
</comment>
<dbReference type="EC" id="4.2.3.5" evidence="1"/>
<dbReference type="EMBL" id="AE016823">
    <property type="protein sequence ID" value="AAS68773.1"/>
    <property type="molecule type" value="Genomic_DNA"/>
</dbReference>
<dbReference type="RefSeq" id="WP_001141234.1">
    <property type="nucleotide sequence ID" value="NC_005823.1"/>
</dbReference>
<dbReference type="SMR" id="Q72W01"/>
<dbReference type="GeneID" id="61143495"/>
<dbReference type="KEGG" id="lic:LIC_10140"/>
<dbReference type="HOGENOM" id="CLU_034547_0_1_12"/>
<dbReference type="UniPathway" id="UPA00053">
    <property type="reaction ID" value="UER00090"/>
</dbReference>
<dbReference type="Proteomes" id="UP000007037">
    <property type="component" value="Chromosome I"/>
</dbReference>
<dbReference type="GO" id="GO:0005829">
    <property type="term" value="C:cytosol"/>
    <property type="evidence" value="ECO:0007669"/>
    <property type="project" value="TreeGrafter"/>
</dbReference>
<dbReference type="GO" id="GO:0004107">
    <property type="term" value="F:chorismate synthase activity"/>
    <property type="evidence" value="ECO:0007669"/>
    <property type="project" value="UniProtKB-UniRule"/>
</dbReference>
<dbReference type="GO" id="GO:0010181">
    <property type="term" value="F:FMN binding"/>
    <property type="evidence" value="ECO:0007669"/>
    <property type="project" value="TreeGrafter"/>
</dbReference>
<dbReference type="GO" id="GO:0008652">
    <property type="term" value="P:amino acid biosynthetic process"/>
    <property type="evidence" value="ECO:0007669"/>
    <property type="project" value="UniProtKB-KW"/>
</dbReference>
<dbReference type="GO" id="GO:0009073">
    <property type="term" value="P:aromatic amino acid family biosynthetic process"/>
    <property type="evidence" value="ECO:0007669"/>
    <property type="project" value="UniProtKB-KW"/>
</dbReference>
<dbReference type="GO" id="GO:0009423">
    <property type="term" value="P:chorismate biosynthetic process"/>
    <property type="evidence" value="ECO:0007669"/>
    <property type="project" value="UniProtKB-UniRule"/>
</dbReference>
<dbReference type="CDD" id="cd07304">
    <property type="entry name" value="Chorismate_synthase"/>
    <property type="match status" value="1"/>
</dbReference>
<dbReference type="FunFam" id="3.60.150.10:FF:000003">
    <property type="entry name" value="Chorismate synthase"/>
    <property type="match status" value="1"/>
</dbReference>
<dbReference type="Gene3D" id="3.60.150.10">
    <property type="entry name" value="Chorismate synthase AroC"/>
    <property type="match status" value="1"/>
</dbReference>
<dbReference type="HAMAP" id="MF_00300">
    <property type="entry name" value="Chorismate_synth"/>
    <property type="match status" value="1"/>
</dbReference>
<dbReference type="InterPro" id="IPR000453">
    <property type="entry name" value="Chorismate_synth"/>
</dbReference>
<dbReference type="InterPro" id="IPR035904">
    <property type="entry name" value="Chorismate_synth_AroC_sf"/>
</dbReference>
<dbReference type="InterPro" id="IPR020541">
    <property type="entry name" value="Chorismate_synthase_CS"/>
</dbReference>
<dbReference type="NCBIfam" id="TIGR00033">
    <property type="entry name" value="aroC"/>
    <property type="match status" value="1"/>
</dbReference>
<dbReference type="NCBIfam" id="NF003793">
    <property type="entry name" value="PRK05382.1"/>
    <property type="match status" value="1"/>
</dbReference>
<dbReference type="PANTHER" id="PTHR21085">
    <property type="entry name" value="CHORISMATE SYNTHASE"/>
    <property type="match status" value="1"/>
</dbReference>
<dbReference type="PANTHER" id="PTHR21085:SF0">
    <property type="entry name" value="CHORISMATE SYNTHASE"/>
    <property type="match status" value="1"/>
</dbReference>
<dbReference type="Pfam" id="PF01264">
    <property type="entry name" value="Chorismate_synt"/>
    <property type="match status" value="1"/>
</dbReference>
<dbReference type="PIRSF" id="PIRSF001456">
    <property type="entry name" value="Chorismate_synth"/>
    <property type="match status" value="1"/>
</dbReference>
<dbReference type="SUPFAM" id="SSF103263">
    <property type="entry name" value="Chorismate synthase, AroC"/>
    <property type="match status" value="1"/>
</dbReference>
<dbReference type="PROSITE" id="PS00787">
    <property type="entry name" value="CHORISMATE_SYNTHASE_1"/>
    <property type="match status" value="1"/>
</dbReference>
<dbReference type="PROSITE" id="PS00789">
    <property type="entry name" value="CHORISMATE_SYNTHASE_3"/>
    <property type="match status" value="1"/>
</dbReference>